<protein>
    <recommendedName>
        <fullName evidence="2">Protein/nucleic acid deglycase HchA</fullName>
        <ecNumber evidence="2">3.1.2.-</ecNumber>
        <ecNumber evidence="2">3.5.1.-</ecNumber>
        <ecNumber evidence="2">3.5.1.124</ecNumber>
    </recommendedName>
    <alternativeName>
        <fullName evidence="2">Maillard deglycase</fullName>
    </alternativeName>
</protein>
<organism>
    <name type="scientific">Shigella flexneri</name>
    <dbReference type="NCBI Taxonomy" id="623"/>
    <lineage>
        <taxon>Bacteria</taxon>
        <taxon>Pseudomonadati</taxon>
        <taxon>Pseudomonadota</taxon>
        <taxon>Gammaproteobacteria</taxon>
        <taxon>Enterobacterales</taxon>
        <taxon>Enterobacteriaceae</taxon>
        <taxon>Shigella</taxon>
    </lineage>
</organism>
<keyword id="KW-0963">Cytoplasm</keyword>
<keyword id="KW-0227">DNA damage</keyword>
<keyword id="KW-0234">DNA repair</keyword>
<keyword id="KW-0378">Hydrolase</keyword>
<keyword id="KW-0479">Metal-binding</keyword>
<keyword id="KW-1185">Reference proteome</keyword>
<keyword id="KW-0346">Stress response</keyword>
<keyword id="KW-0862">Zinc</keyword>
<sequence>MTVQTSKNPQVDIAEDNAFFPSEYSLSQYTSPVSDLDGVDYPKPYRGKHKILVIAADERYLPTDNGKLFSTGNHPIETLLPLYHLHAAGFEFEVATISGLMTKFEYWAMPHKDEKVMPFFEQHKSLFRNPKKLADVVASLNADSEYAAIFVPGGHGALIGLPESQDVAAALQWAIKNDRFVISLCHGPAAFLALRHSDNPLNGYSICAFPDAADKQTPDIGYMPGHLTWYFGEELKKMGMNIINDDITGRVHKDRKRLTGDSPFAANALGKLAAQEMLAAYAS</sequence>
<name>HCHA_SHIFL</name>
<accession>P59332</accession>
<proteinExistence type="inferred from homology"/>
<comment type="function">
    <text evidence="2">Protein and nucleotide deglycase that catalyzes the deglycation of the Maillard adducts formed between amino groups of proteins or nucleotides and reactive carbonyl groups of glyoxals. Thus, functions as a protein deglycase that repairs methylglyoxal- and glyoxal-glycated proteins, and releases repaired proteins and lactate or glycolate, respectively. Deglycates cysteine, arginine and lysine residues in proteins, and thus reactivates these proteins by reversing glycation by glyoxals. Acts on early glycation intermediates (hemithioacetals and aminocarbinols), preventing the formation of Schiff bases and advanced glycation endproducts (AGE). Also functions as a nucleotide deglycase able to repair glycated guanine in the free nucleotide pool (GTP, GDP, GMP, dGTP) and in DNA and RNA. Is thus involved in a major nucleotide repair system named guanine glycation repair (GG repair), dedicated to reversing methylglyoxal and glyoxal damage via nucleotide sanitization and direct nucleic acid repair. Plays an important role in protecting cells from carbonyl stress.</text>
</comment>
<comment type="catalytic activity">
    <reaction evidence="2">
        <text>N(omega)-(1-hydroxy-2-oxopropyl)-L-arginyl-[protein] + H2O = lactate + L-arginyl-[protein] + H(+)</text>
        <dbReference type="Rhea" id="RHEA:49548"/>
        <dbReference type="Rhea" id="RHEA-COMP:10532"/>
        <dbReference type="Rhea" id="RHEA-COMP:12428"/>
        <dbReference type="ChEBI" id="CHEBI:15377"/>
        <dbReference type="ChEBI" id="CHEBI:15378"/>
        <dbReference type="ChEBI" id="CHEBI:24996"/>
        <dbReference type="ChEBI" id="CHEBI:29965"/>
        <dbReference type="ChEBI" id="CHEBI:131708"/>
        <dbReference type="EC" id="3.5.1.124"/>
    </reaction>
</comment>
<comment type="catalytic activity">
    <reaction evidence="2">
        <text>N(6)-(1-hydroxy-2-oxopropyl)-L-lysyl-[protein] + H2O = lactate + L-lysyl-[protein] + H(+)</text>
        <dbReference type="Rhea" id="RHEA:49552"/>
        <dbReference type="Rhea" id="RHEA-COMP:9752"/>
        <dbReference type="Rhea" id="RHEA-COMP:12429"/>
        <dbReference type="ChEBI" id="CHEBI:15377"/>
        <dbReference type="ChEBI" id="CHEBI:15378"/>
        <dbReference type="ChEBI" id="CHEBI:24996"/>
        <dbReference type="ChEBI" id="CHEBI:29969"/>
        <dbReference type="ChEBI" id="CHEBI:131709"/>
        <dbReference type="EC" id="3.5.1.124"/>
    </reaction>
</comment>
<comment type="catalytic activity">
    <reaction evidence="2">
        <text>S-(1-hydroxy-2-oxopropyl)-L-cysteinyl-[protein] + H2O = lactate + L-cysteinyl-[protein] + H(+)</text>
        <dbReference type="Rhea" id="RHEA:49556"/>
        <dbReference type="Rhea" id="RHEA-COMP:10131"/>
        <dbReference type="Rhea" id="RHEA-COMP:12430"/>
        <dbReference type="ChEBI" id="CHEBI:15377"/>
        <dbReference type="ChEBI" id="CHEBI:15378"/>
        <dbReference type="ChEBI" id="CHEBI:24996"/>
        <dbReference type="ChEBI" id="CHEBI:29950"/>
        <dbReference type="ChEBI" id="CHEBI:131710"/>
        <dbReference type="EC" id="3.5.1.124"/>
    </reaction>
</comment>
<comment type="catalytic activity">
    <reaction evidence="2">
        <text>N(omega)-(1-hydroxy-2-oxoethyl)-L-arginyl-[protein] + H2O = L-arginyl-[protein] + glycolate + H(+)</text>
        <dbReference type="Rhea" id="RHEA:57188"/>
        <dbReference type="Rhea" id="RHEA-COMP:10532"/>
        <dbReference type="Rhea" id="RHEA-COMP:14844"/>
        <dbReference type="ChEBI" id="CHEBI:15377"/>
        <dbReference type="ChEBI" id="CHEBI:15378"/>
        <dbReference type="ChEBI" id="CHEBI:29805"/>
        <dbReference type="ChEBI" id="CHEBI:29965"/>
        <dbReference type="ChEBI" id="CHEBI:141553"/>
        <dbReference type="EC" id="3.5.1.124"/>
    </reaction>
</comment>
<comment type="catalytic activity">
    <reaction evidence="2">
        <text>N(6)-(1-hydroxy-2-oxoethyl)-L-lysyl-[protein] + H2O = glycolate + L-lysyl-[protein] + H(+)</text>
        <dbReference type="Rhea" id="RHEA:57192"/>
        <dbReference type="Rhea" id="RHEA-COMP:9752"/>
        <dbReference type="Rhea" id="RHEA-COMP:14845"/>
        <dbReference type="ChEBI" id="CHEBI:15377"/>
        <dbReference type="ChEBI" id="CHEBI:15378"/>
        <dbReference type="ChEBI" id="CHEBI:29805"/>
        <dbReference type="ChEBI" id="CHEBI:29969"/>
        <dbReference type="ChEBI" id="CHEBI:141554"/>
        <dbReference type="EC" id="3.5.1.124"/>
    </reaction>
</comment>
<comment type="catalytic activity">
    <reaction evidence="2">
        <text>S-(1-hydroxy-2-oxoethyl)-L-cysteinyl-[protein] + H2O = glycolate + L-cysteinyl-[protein] + H(+)</text>
        <dbReference type="Rhea" id="RHEA:57196"/>
        <dbReference type="Rhea" id="RHEA-COMP:10131"/>
        <dbReference type="Rhea" id="RHEA-COMP:14846"/>
        <dbReference type="ChEBI" id="CHEBI:15377"/>
        <dbReference type="ChEBI" id="CHEBI:15378"/>
        <dbReference type="ChEBI" id="CHEBI:29805"/>
        <dbReference type="ChEBI" id="CHEBI:29950"/>
        <dbReference type="ChEBI" id="CHEBI:141555"/>
        <dbReference type="EC" id="3.5.1.124"/>
    </reaction>
</comment>
<comment type="catalytic activity">
    <reaction evidence="2">
        <text>N(2)-(1-hydroxy-2-oxopropyl)-dGTP + H2O = lactate + dGTP + H(+)</text>
        <dbReference type="Rhea" id="RHEA:57244"/>
        <dbReference type="ChEBI" id="CHEBI:15377"/>
        <dbReference type="ChEBI" id="CHEBI:15378"/>
        <dbReference type="ChEBI" id="CHEBI:24996"/>
        <dbReference type="ChEBI" id="CHEBI:61429"/>
        <dbReference type="ChEBI" id="CHEBI:141569"/>
    </reaction>
</comment>
<comment type="catalytic activity">
    <reaction evidence="2">
        <text>N(2)-(1-hydroxy-2-oxopropyl)-GTP + H2O = lactate + GTP + H(+)</text>
        <dbReference type="Rhea" id="RHEA:57256"/>
        <dbReference type="ChEBI" id="CHEBI:15377"/>
        <dbReference type="ChEBI" id="CHEBI:15378"/>
        <dbReference type="ChEBI" id="CHEBI:24996"/>
        <dbReference type="ChEBI" id="CHEBI:37565"/>
        <dbReference type="ChEBI" id="CHEBI:141570"/>
    </reaction>
</comment>
<comment type="catalytic activity">
    <reaction evidence="2">
        <text>N(2)-(1-hydroxy-2-oxopropyl)-GDP + H2O = lactate + GDP + H(+)</text>
        <dbReference type="Rhea" id="RHEA:57260"/>
        <dbReference type="ChEBI" id="CHEBI:15377"/>
        <dbReference type="ChEBI" id="CHEBI:15378"/>
        <dbReference type="ChEBI" id="CHEBI:24996"/>
        <dbReference type="ChEBI" id="CHEBI:58189"/>
        <dbReference type="ChEBI" id="CHEBI:141573"/>
    </reaction>
</comment>
<comment type="catalytic activity">
    <reaction evidence="2">
        <text>N(2)-(1-hydroxy-2-oxopropyl)-GMP + H2O = lactate + GMP + H(+)</text>
        <dbReference type="Rhea" id="RHEA:57268"/>
        <dbReference type="ChEBI" id="CHEBI:15377"/>
        <dbReference type="ChEBI" id="CHEBI:15378"/>
        <dbReference type="ChEBI" id="CHEBI:24996"/>
        <dbReference type="ChEBI" id="CHEBI:58115"/>
        <dbReference type="ChEBI" id="CHEBI:141575"/>
    </reaction>
</comment>
<comment type="catalytic activity">
    <reaction evidence="2">
        <text>N(2)-(1-hydroxy-2-oxoethyl)-dGTP + H2O = dGTP + glycolate + H(+)</text>
        <dbReference type="Rhea" id="RHEA:57248"/>
        <dbReference type="ChEBI" id="CHEBI:15377"/>
        <dbReference type="ChEBI" id="CHEBI:15378"/>
        <dbReference type="ChEBI" id="CHEBI:29805"/>
        <dbReference type="ChEBI" id="CHEBI:61429"/>
        <dbReference type="ChEBI" id="CHEBI:141572"/>
    </reaction>
</comment>
<comment type="catalytic activity">
    <reaction evidence="2">
        <text>N(2)-(1-hydroxy-2-oxoethyl)-GTP + H2O = glycolate + GTP + H(+)</text>
        <dbReference type="Rhea" id="RHEA:57252"/>
        <dbReference type="ChEBI" id="CHEBI:15377"/>
        <dbReference type="ChEBI" id="CHEBI:15378"/>
        <dbReference type="ChEBI" id="CHEBI:29805"/>
        <dbReference type="ChEBI" id="CHEBI:37565"/>
        <dbReference type="ChEBI" id="CHEBI:141571"/>
    </reaction>
</comment>
<comment type="catalytic activity">
    <reaction evidence="2">
        <text>N(2)-(1-hydroxy-2-oxoethyl)-GDP + H2O = glycolate + GDP + H(+)</text>
        <dbReference type="Rhea" id="RHEA:57264"/>
        <dbReference type="ChEBI" id="CHEBI:15377"/>
        <dbReference type="ChEBI" id="CHEBI:15378"/>
        <dbReference type="ChEBI" id="CHEBI:29805"/>
        <dbReference type="ChEBI" id="CHEBI:58189"/>
        <dbReference type="ChEBI" id="CHEBI:141574"/>
    </reaction>
</comment>
<comment type="catalytic activity">
    <reaction evidence="2">
        <text>N(2)-(1-hydroxy-2-oxoethyl)-GMP + H2O = glycolate + GMP + H(+)</text>
        <dbReference type="Rhea" id="RHEA:57304"/>
        <dbReference type="ChEBI" id="CHEBI:15377"/>
        <dbReference type="ChEBI" id="CHEBI:15378"/>
        <dbReference type="ChEBI" id="CHEBI:29805"/>
        <dbReference type="ChEBI" id="CHEBI:58115"/>
        <dbReference type="ChEBI" id="CHEBI:141576"/>
    </reaction>
</comment>
<comment type="catalytic activity">
    <reaction evidence="2">
        <text>an N(2)-(1-hydroxy-2-oxopropyl)-guanosine in RNA + H2O = a guanosine in RNA + lactate + H(+)</text>
        <dbReference type="Rhea" id="RHEA:57288"/>
        <dbReference type="Rhea" id="RHEA-COMP:14855"/>
        <dbReference type="Rhea" id="RHEA-COMP:14858"/>
        <dbReference type="ChEBI" id="CHEBI:15377"/>
        <dbReference type="ChEBI" id="CHEBI:15378"/>
        <dbReference type="ChEBI" id="CHEBI:24996"/>
        <dbReference type="ChEBI" id="CHEBI:74269"/>
        <dbReference type="ChEBI" id="CHEBI:141580"/>
    </reaction>
</comment>
<comment type="catalytic activity">
    <reaction evidence="2">
        <text>an N(2)-(1-hydroxy-2-oxopropyl)-2'-deoxyguanosine in DNA + H2O = a 2'-deoxyguanosine in DNA + lactate + H(+)</text>
        <dbReference type="Rhea" id="RHEA:57300"/>
        <dbReference type="Rhea" id="RHEA-COMP:11367"/>
        <dbReference type="Rhea" id="RHEA-COMP:14856"/>
        <dbReference type="ChEBI" id="CHEBI:15377"/>
        <dbReference type="ChEBI" id="CHEBI:15378"/>
        <dbReference type="ChEBI" id="CHEBI:24996"/>
        <dbReference type="ChEBI" id="CHEBI:85445"/>
        <dbReference type="ChEBI" id="CHEBI:141578"/>
    </reaction>
</comment>
<comment type="catalytic activity">
    <reaction evidence="2">
        <text>an N(2)-(1-hydroxy-2-oxoethyl)-guanosine in RNA + H2O = a guanosine in RNA + glycolate + H(+)</text>
        <dbReference type="Rhea" id="RHEA:57292"/>
        <dbReference type="Rhea" id="RHEA-COMP:14855"/>
        <dbReference type="Rhea" id="RHEA-COMP:14859"/>
        <dbReference type="ChEBI" id="CHEBI:15377"/>
        <dbReference type="ChEBI" id="CHEBI:15378"/>
        <dbReference type="ChEBI" id="CHEBI:29805"/>
        <dbReference type="ChEBI" id="CHEBI:74269"/>
        <dbReference type="ChEBI" id="CHEBI:141581"/>
    </reaction>
</comment>
<comment type="catalytic activity">
    <reaction evidence="2">
        <text>an N(2)-(1-hydroxy-2-oxoethyl)-2'-deoxyguanosine in DNA + H2O = a 2'-deoxyguanosine in DNA + glycolate + H(+)</text>
        <dbReference type="Rhea" id="RHEA:57296"/>
        <dbReference type="Rhea" id="RHEA-COMP:11367"/>
        <dbReference type="Rhea" id="RHEA-COMP:14857"/>
        <dbReference type="ChEBI" id="CHEBI:15377"/>
        <dbReference type="ChEBI" id="CHEBI:15378"/>
        <dbReference type="ChEBI" id="CHEBI:29805"/>
        <dbReference type="ChEBI" id="CHEBI:85445"/>
        <dbReference type="ChEBI" id="CHEBI:141579"/>
    </reaction>
</comment>
<comment type="subunit">
    <text evidence="2">Homodimer.</text>
</comment>
<comment type="subcellular location">
    <subcellularLocation>
        <location evidence="2">Cytoplasm</location>
    </subcellularLocation>
</comment>
<comment type="induction">
    <text evidence="2">By heat shock.</text>
</comment>
<comment type="similarity">
    <text evidence="2">Belongs to the peptidase C56 family. HchA subfamily.</text>
</comment>
<reference key="1">
    <citation type="journal article" date="2002" name="Nucleic Acids Res.">
        <title>Genome sequence of Shigella flexneri 2a: insights into pathogenicity through comparison with genomes of Escherichia coli K12 and O157.</title>
        <authorList>
            <person name="Jin Q."/>
            <person name="Yuan Z."/>
            <person name="Xu J."/>
            <person name="Wang Y."/>
            <person name="Shen Y."/>
            <person name="Lu W."/>
            <person name="Wang J."/>
            <person name="Liu H."/>
            <person name="Yang J."/>
            <person name="Yang F."/>
            <person name="Zhang X."/>
            <person name="Zhang J."/>
            <person name="Yang G."/>
            <person name="Wu H."/>
            <person name="Qu D."/>
            <person name="Dong J."/>
            <person name="Sun L."/>
            <person name="Xue Y."/>
            <person name="Zhao A."/>
            <person name="Gao Y."/>
            <person name="Zhu J."/>
            <person name="Kan B."/>
            <person name="Ding K."/>
            <person name="Chen S."/>
            <person name="Cheng H."/>
            <person name="Yao Z."/>
            <person name="He B."/>
            <person name="Chen R."/>
            <person name="Ma D."/>
            <person name="Qiang B."/>
            <person name="Wen Y."/>
            <person name="Hou Y."/>
            <person name="Yu J."/>
        </authorList>
    </citation>
    <scope>NUCLEOTIDE SEQUENCE [LARGE SCALE GENOMIC DNA]</scope>
    <source>
        <strain>301 / Serotype 2a</strain>
    </source>
</reference>
<reference key="2">
    <citation type="journal article" date="2003" name="Infect. Immun.">
        <title>Complete genome sequence and comparative genomics of Shigella flexneri serotype 2a strain 2457T.</title>
        <authorList>
            <person name="Wei J."/>
            <person name="Goldberg M.B."/>
            <person name="Burland V."/>
            <person name="Venkatesan M.M."/>
            <person name="Deng W."/>
            <person name="Fournier G."/>
            <person name="Mayhew G.F."/>
            <person name="Plunkett G. III"/>
            <person name="Rose D.J."/>
            <person name="Darling A."/>
            <person name="Mau B."/>
            <person name="Perna N.T."/>
            <person name="Payne S.M."/>
            <person name="Runyen-Janecky L.J."/>
            <person name="Zhou S."/>
            <person name="Schwartz D.C."/>
            <person name="Blattner F.R."/>
        </authorList>
    </citation>
    <scope>NUCLEOTIDE SEQUENCE [LARGE SCALE GENOMIC DNA]</scope>
    <source>
        <strain>ATCC 700930 / 2457T / Serotype 2a</strain>
    </source>
</reference>
<gene>
    <name evidence="2" type="primary">hchA</name>
    <name type="ordered locus">SF2014</name>
    <name type="ordered locus">S2111</name>
</gene>
<dbReference type="EC" id="3.1.2.-" evidence="2"/>
<dbReference type="EC" id="3.5.1.-" evidence="2"/>
<dbReference type="EC" id="3.5.1.124" evidence="2"/>
<dbReference type="EMBL" id="AE005674">
    <property type="protein sequence ID" value="AAN43559.1"/>
    <property type="molecule type" value="Genomic_DNA"/>
</dbReference>
<dbReference type="EMBL" id="AE014073">
    <property type="protein sequence ID" value="AAP17385.1"/>
    <property type="molecule type" value="Genomic_DNA"/>
</dbReference>
<dbReference type="RefSeq" id="WP_000218218.1">
    <property type="nucleotide sequence ID" value="NZ_WPGS01000130.1"/>
</dbReference>
<dbReference type="SMR" id="P59332"/>
<dbReference type="STRING" id="198214.SF2014"/>
<dbReference type="MEROPS" id="C56.006"/>
<dbReference type="PaxDb" id="198214-SF2014"/>
<dbReference type="KEGG" id="sfl:SF2014"/>
<dbReference type="KEGG" id="sfx:S2111"/>
<dbReference type="PATRIC" id="fig|198214.7.peg.2406"/>
<dbReference type="HOGENOM" id="CLU_066933_0_0_6"/>
<dbReference type="Proteomes" id="UP000001006">
    <property type="component" value="Chromosome"/>
</dbReference>
<dbReference type="Proteomes" id="UP000002673">
    <property type="component" value="Chromosome"/>
</dbReference>
<dbReference type="GO" id="GO:0005737">
    <property type="term" value="C:cytoplasm"/>
    <property type="evidence" value="ECO:0007669"/>
    <property type="project" value="UniProtKB-SubCell"/>
</dbReference>
<dbReference type="GO" id="GO:0019172">
    <property type="term" value="F:glyoxalase III activity"/>
    <property type="evidence" value="ECO:0007669"/>
    <property type="project" value="TreeGrafter"/>
</dbReference>
<dbReference type="GO" id="GO:0036524">
    <property type="term" value="F:protein deglycase activity"/>
    <property type="evidence" value="ECO:0007669"/>
    <property type="project" value="UniProtKB-UniRule"/>
</dbReference>
<dbReference type="GO" id="GO:0016790">
    <property type="term" value="F:thiolester hydrolase activity"/>
    <property type="evidence" value="ECO:0007669"/>
    <property type="project" value="UniProtKB-UniRule"/>
</dbReference>
<dbReference type="GO" id="GO:0008270">
    <property type="term" value="F:zinc ion binding"/>
    <property type="evidence" value="ECO:0007669"/>
    <property type="project" value="UniProtKB-UniRule"/>
</dbReference>
<dbReference type="GO" id="GO:0006281">
    <property type="term" value="P:DNA repair"/>
    <property type="evidence" value="ECO:0007669"/>
    <property type="project" value="UniProtKB-UniRule"/>
</dbReference>
<dbReference type="GO" id="GO:0019243">
    <property type="term" value="P:methylglyoxal catabolic process to D-lactate via S-lactoyl-glutathione"/>
    <property type="evidence" value="ECO:0007669"/>
    <property type="project" value="TreeGrafter"/>
</dbReference>
<dbReference type="GO" id="GO:0030091">
    <property type="term" value="P:protein repair"/>
    <property type="evidence" value="ECO:0007669"/>
    <property type="project" value="UniProtKB-UniRule"/>
</dbReference>
<dbReference type="FunFam" id="3.40.50.880:FF:000026">
    <property type="entry name" value="Protein/nucleic acid deglycase HchA"/>
    <property type="match status" value="1"/>
</dbReference>
<dbReference type="Gene3D" id="3.40.50.880">
    <property type="match status" value="1"/>
</dbReference>
<dbReference type="HAMAP" id="MF_01046">
    <property type="entry name" value="Deglycase_HchA"/>
    <property type="match status" value="1"/>
</dbReference>
<dbReference type="InterPro" id="IPR029062">
    <property type="entry name" value="Class_I_gatase-like"/>
</dbReference>
<dbReference type="InterPro" id="IPR017283">
    <property type="entry name" value="HchA"/>
</dbReference>
<dbReference type="InterPro" id="IPR050325">
    <property type="entry name" value="Prot/Nucl_acid_deglycase"/>
</dbReference>
<dbReference type="NCBIfam" id="NF003168">
    <property type="entry name" value="PRK04155.1"/>
    <property type="match status" value="1"/>
</dbReference>
<dbReference type="PANTHER" id="PTHR48094">
    <property type="entry name" value="PROTEIN/NUCLEIC ACID DEGLYCASE DJ-1-RELATED"/>
    <property type="match status" value="1"/>
</dbReference>
<dbReference type="PANTHER" id="PTHR48094:SF20">
    <property type="entry name" value="PROTEIN_NUCLEIC ACID DEGLYCASE 1"/>
    <property type="match status" value="1"/>
</dbReference>
<dbReference type="PIRSF" id="PIRSF037798">
    <property type="entry name" value="Chaperone_HchA"/>
    <property type="match status" value="1"/>
</dbReference>
<dbReference type="SUPFAM" id="SSF52317">
    <property type="entry name" value="Class I glutamine amidotransferase-like"/>
    <property type="match status" value="1"/>
</dbReference>
<evidence type="ECO:0000250" key="1"/>
<evidence type="ECO:0000255" key="2">
    <source>
        <dbReference type="HAMAP-Rule" id="MF_01046"/>
    </source>
</evidence>
<evidence type="ECO:0000305" key="3"/>
<feature type="initiator methionine" description="Removed" evidence="1">
    <location>
        <position position="1"/>
    </location>
</feature>
<feature type="chain" id="PRO_0000209416" description="Protein/nucleic acid deglycase HchA">
    <location>
        <begin position="2"/>
        <end position="283"/>
    </location>
</feature>
<feature type="active site" description="Nucleophile" evidence="2">
    <location>
        <position position="185"/>
    </location>
</feature>
<feature type="binding site" evidence="2">
    <location>
        <position position="86"/>
    </location>
    <ligand>
        <name>Zn(2+)</name>
        <dbReference type="ChEBI" id="CHEBI:29105"/>
    </ligand>
</feature>
<feature type="binding site" evidence="2">
    <location>
        <position position="91"/>
    </location>
    <ligand>
        <name>Zn(2+)</name>
        <dbReference type="ChEBI" id="CHEBI:29105"/>
    </ligand>
</feature>
<feature type="binding site" evidence="2">
    <location>
        <position position="123"/>
    </location>
    <ligand>
        <name>Zn(2+)</name>
        <dbReference type="ChEBI" id="CHEBI:29105"/>
    </ligand>
</feature>
<feature type="sequence conflict" description="In Ref. 2; AAP17385." evidence="3" ref="2">
    <original>EMLAAYAS</original>
    <variation>KCWQLTRVNPCYIVM</variation>
    <location>
        <begin position="276"/>
        <end position="283"/>
    </location>
</feature>